<protein>
    <recommendedName>
        <fullName evidence="6">Pacifastin-like protease inhibitor cvp4</fullName>
    </recommendedName>
    <alternativeName>
        <fullName evidence="6">Cysteine-rich venom protein 4</fullName>
    </alternativeName>
</protein>
<dbReference type="EMBL" id="AJ438995">
    <property type="protein sequence ID" value="CAD27740.1"/>
    <property type="molecule type" value="mRNA"/>
</dbReference>
<dbReference type="SMR" id="Q8T0W2"/>
<dbReference type="GO" id="GO:0005576">
    <property type="term" value="C:extracellular region"/>
    <property type="evidence" value="ECO:0007669"/>
    <property type="project" value="UniProtKB-SubCell"/>
</dbReference>
<dbReference type="GO" id="GO:0004867">
    <property type="term" value="F:serine-type endopeptidase inhibitor activity"/>
    <property type="evidence" value="ECO:0007669"/>
    <property type="project" value="UniProtKB-KW"/>
</dbReference>
<dbReference type="InterPro" id="IPR008037">
    <property type="entry name" value="Pacifastin_dom"/>
</dbReference>
<dbReference type="InterPro" id="IPR036201">
    <property type="entry name" value="Pacifastin_dom_sf"/>
</dbReference>
<dbReference type="InterPro" id="IPR016307">
    <property type="entry name" value="Prtase-inh_pacifastin"/>
</dbReference>
<dbReference type="Pfam" id="PF05375">
    <property type="entry name" value="Pacifastin_I"/>
    <property type="match status" value="3"/>
</dbReference>
<dbReference type="PIRSF" id="PIRSF001625">
    <property type="entry name" value="Prot_inhib_pacifastin"/>
    <property type="match status" value="1"/>
</dbReference>
<dbReference type="SUPFAM" id="SSF57283">
    <property type="entry name" value="PMP inhibitors"/>
    <property type="match status" value="2"/>
</dbReference>
<dbReference type="PROSITE" id="PS51446">
    <property type="entry name" value="PACIFASTIN"/>
    <property type="match status" value="3"/>
</dbReference>
<keyword id="KW-0903">Direct protein sequencing</keyword>
<keyword id="KW-1015">Disulfide bond</keyword>
<keyword id="KW-0646">Protease inhibitor</keyword>
<keyword id="KW-0677">Repeat</keyword>
<keyword id="KW-0964">Secreted</keyword>
<keyword id="KW-0722">Serine protease inhibitor</keyword>
<keyword id="KW-0732">Signal</keyword>
<comment type="function">
    <text evidence="1">Inhibits trypsin activity and prophenoloxidase (PPO) activation, an enzyme essential for both clotting and insect innate immune responses. It does not inhibit activity of chymotrypsin and protease K, and has no effect on phenoloxidase (PO) activity.</text>
</comment>
<comment type="subcellular location">
    <subcellularLocation>
        <location evidence="5">Secreted</location>
    </subcellularLocation>
</comment>
<comment type="tissue specificity">
    <text evidence="8">Expressed by the venom gland.</text>
</comment>
<comment type="similarity">
    <text evidence="7">Belongs to the protease inhibitor I19 family.</text>
</comment>
<name>CVP4_PIMHY</name>
<organism>
    <name type="scientific">Pimpla hypochondriaca</name>
    <name type="common">Parasitoid wasp</name>
    <dbReference type="NCBI Taxonomy" id="135724"/>
    <lineage>
        <taxon>Eukaryota</taxon>
        <taxon>Metazoa</taxon>
        <taxon>Ecdysozoa</taxon>
        <taxon>Arthropoda</taxon>
        <taxon>Hexapoda</taxon>
        <taxon>Insecta</taxon>
        <taxon>Pterygota</taxon>
        <taxon>Neoptera</taxon>
        <taxon>Endopterygota</taxon>
        <taxon>Hymenoptera</taxon>
        <taxon>Apocrita</taxon>
        <taxon>Ichneumonoidea</taxon>
        <taxon>Ichneumonidae</taxon>
        <taxon>Pimplinae</taxon>
        <taxon>Pimplini</taxon>
        <taxon>Pimpla</taxon>
    </lineage>
</organism>
<feature type="signal peptide" evidence="5">
    <location>
        <begin position="1"/>
        <end position="19"/>
    </location>
</feature>
<feature type="chain" id="PRO_0000026713" description="Pacifastin-like protease inhibitor cvp4" evidence="8">
    <location>
        <begin position="20"/>
        <end position="203"/>
    </location>
</feature>
<feature type="domain" description="Pacifastin 1" evidence="3">
    <location>
        <begin position="23"/>
        <end position="59"/>
    </location>
</feature>
<feature type="domain" description="Pacifastin 2" evidence="3">
    <location>
        <begin position="85"/>
        <end position="121"/>
    </location>
</feature>
<feature type="domain" description="Pacifastin 3" evidence="3">
    <location>
        <begin position="147"/>
        <end position="184"/>
    </location>
</feature>
<feature type="region of interest" description="Disordered" evidence="4">
    <location>
        <begin position="129"/>
        <end position="150"/>
    </location>
</feature>
<feature type="compositionally biased region" description="Basic and acidic residues" evidence="4">
    <location>
        <begin position="129"/>
        <end position="148"/>
    </location>
</feature>
<feature type="disulfide bond" evidence="3">
    <location>
        <begin position="26"/>
        <end position="41"/>
    </location>
</feature>
<feature type="disulfide bond" evidence="3">
    <location>
        <begin position="36"/>
        <end position="56"/>
    </location>
</feature>
<feature type="disulfide bond" evidence="3">
    <location>
        <begin position="39"/>
        <end position="51"/>
    </location>
</feature>
<feature type="disulfide bond" evidence="2">
    <location>
        <begin position="88"/>
        <end position="103"/>
    </location>
</feature>
<feature type="disulfide bond" evidence="2">
    <location>
        <begin position="98"/>
        <end position="118"/>
    </location>
</feature>
<feature type="disulfide bond" evidence="2">
    <location>
        <begin position="101"/>
        <end position="113"/>
    </location>
</feature>
<feature type="disulfide bond" evidence="2">
    <location>
        <begin position="150"/>
        <end position="165"/>
    </location>
</feature>
<feature type="disulfide bond" evidence="2">
    <location>
        <begin position="160"/>
        <end position="181"/>
    </location>
</feature>
<feature type="disulfide bond" evidence="2">
    <location>
        <begin position="163"/>
        <end position="176"/>
    </location>
</feature>
<reference evidence="7 9" key="1">
    <citation type="journal article" date="2004" name="Insect Biochem. Mol. Biol.">
        <title>Towards a comprehensive view of the primary structure of venom proteins from the parasitoid wasp Pimpla hypochondriaca.</title>
        <authorList>
            <person name="Parkinson N.M."/>
            <person name="Conyers C."/>
            <person name="Keen J."/>
            <person name="MacNicoll A."/>
            <person name="Smith I."/>
            <person name="Audsley N."/>
            <person name="Weaver R."/>
        </authorList>
    </citation>
    <scope>NUCLEOTIDE SEQUENCE [MRNA]</scope>
    <scope>PROTEIN SEQUENCE OF 20-25</scope>
    <scope>SUBCELLULAR LOCATION</scope>
    <source>
        <tissue evidence="5">Venom</tissue>
        <tissue evidence="5">Venom gland</tissue>
    </source>
</reference>
<proteinExistence type="evidence at protein level"/>
<evidence type="ECO:0000250" key="1">
    <source>
        <dbReference type="UniProtKB" id="A0A7M6UNN1"/>
    </source>
</evidence>
<evidence type="ECO:0000250" key="2">
    <source>
        <dbReference type="UniProtKB" id="O46162"/>
    </source>
</evidence>
<evidence type="ECO:0000255" key="3">
    <source>
        <dbReference type="PROSITE-ProRule" id="PRU00776"/>
    </source>
</evidence>
<evidence type="ECO:0000256" key="4">
    <source>
        <dbReference type="SAM" id="MobiDB-lite"/>
    </source>
</evidence>
<evidence type="ECO:0000269" key="5">
    <source>
    </source>
</evidence>
<evidence type="ECO:0000303" key="6">
    <source>
    </source>
</evidence>
<evidence type="ECO:0000305" key="7"/>
<evidence type="ECO:0000305" key="8">
    <source>
    </source>
</evidence>
<evidence type="ECO:0000312" key="9">
    <source>
        <dbReference type="EMBL" id="CAD27740.1"/>
    </source>
</evidence>
<accession>Q8T0W2</accession>
<sequence>MGFLACALLVVATAHAATAIVNPETCEIGSNFKNYCNNCYCFDGVMDHALCTRESCDRNVWNEDGTRKFPKPGKWISEKENKKNDEPCTPGENFKYYCNDCQCLDGLRAHAMCTRMRCDRNVFNEDGTRKYPEPEKWNSEKERKKSDESCAPGASFKYYCNSCTCGAEGKVAEAQCTSQECDRYKWKKDGSKRPFTLDPVLHD</sequence>